<comment type="function">
    <text evidence="1">Involved in the modulation of the specificity of the ClpAP-mediated ATP-dependent protein degradation.</text>
</comment>
<comment type="subunit">
    <text evidence="1">Binds to the N-terminal domain of the chaperone ClpA.</text>
</comment>
<comment type="similarity">
    <text evidence="1">Belongs to the ClpS family.</text>
</comment>
<sequence>MAIIPDKQDGTVLERQEKKLKPPSMYKVVLLNDDFTPMEFVVMIVQEYFNKDRETATQVMLKVHREGRGVCGVYTRDIASTKVEQVVTHARQAGHPLQCVMEEA</sequence>
<reference key="1">
    <citation type="journal article" date="2006" name="Proc. Natl. Acad. Sci. U.S.A.">
        <title>Burkholderia xenovorans LB400 harbors a multi-replicon, 9.73-Mbp genome shaped for versatility.</title>
        <authorList>
            <person name="Chain P.S.G."/>
            <person name="Denef V.J."/>
            <person name="Konstantinidis K.T."/>
            <person name="Vergez L.M."/>
            <person name="Agullo L."/>
            <person name="Reyes V.L."/>
            <person name="Hauser L."/>
            <person name="Cordova M."/>
            <person name="Gomez L."/>
            <person name="Gonzalez M."/>
            <person name="Land M."/>
            <person name="Lao V."/>
            <person name="Larimer F."/>
            <person name="LiPuma J.J."/>
            <person name="Mahenthiralingam E."/>
            <person name="Malfatti S.A."/>
            <person name="Marx C.J."/>
            <person name="Parnell J.J."/>
            <person name="Ramette A."/>
            <person name="Richardson P."/>
            <person name="Seeger M."/>
            <person name="Smith D."/>
            <person name="Spilker T."/>
            <person name="Sul W.J."/>
            <person name="Tsoi T.V."/>
            <person name="Ulrich L.E."/>
            <person name="Zhulin I.B."/>
            <person name="Tiedje J.M."/>
        </authorList>
    </citation>
    <scope>NUCLEOTIDE SEQUENCE [LARGE SCALE GENOMIC DNA]</scope>
    <source>
        <strain>LB400</strain>
    </source>
</reference>
<gene>
    <name evidence="1" type="primary">clpS</name>
    <name type="ordered locus">Bxeno_A3596</name>
    <name type="ORF">Bxe_A0800</name>
</gene>
<keyword id="KW-1185">Reference proteome</keyword>
<organism>
    <name type="scientific">Paraburkholderia xenovorans (strain LB400)</name>
    <dbReference type="NCBI Taxonomy" id="266265"/>
    <lineage>
        <taxon>Bacteria</taxon>
        <taxon>Pseudomonadati</taxon>
        <taxon>Pseudomonadota</taxon>
        <taxon>Betaproteobacteria</taxon>
        <taxon>Burkholderiales</taxon>
        <taxon>Burkholderiaceae</taxon>
        <taxon>Paraburkholderia</taxon>
    </lineage>
</organism>
<feature type="chain" id="PRO_1000022602" description="ATP-dependent Clp protease adapter protein ClpS">
    <location>
        <begin position="1"/>
        <end position="104"/>
    </location>
</feature>
<protein>
    <recommendedName>
        <fullName evidence="1">ATP-dependent Clp protease adapter protein ClpS</fullName>
    </recommendedName>
</protein>
<proteinExistence type="inferred from homology"/>
<accession>Q13UV5</accession>
<dbReference type="EMBL" id="CP000270">
    <property type="protein sequence ID" value="ABE32134.1"/>
    <property type="molecule type" value="Genomic_DNA"/>
</dbReference>
<dbReference type="RefSeq" id="WP_006050100.1">
    <property type="nucleotide sequence ID" value="NZ_CP008760.1"/>
</dbReference>
<dbReference type="SMR" id="Q13UV5"/>
<dbReference type="STRING" id="266265.Bxe_A0800"/>
<dbReference type="GeneID" id="97052523"/>
<dbReference type="KEGG" id="bxb:DR64_2965"/>
<dbReference type="KEGG" id="bxe:Bxe_A0800"/>
<dbReference type="eggNOG" id="COG2127">
    <property type="taxonomic scope" value="Bacteria"/>
</dbReference>
<dbReference type="OrthoDB" id="9796121at2"/>
<dbReference type="Proteomes" id="UP000001817">
    <property type="component" value="Chromosome 1"/>
</dbReference>
<dbReference type="GO" id="GO:0030163">
    <property type="term" value="P:protein catabolic process"/>
    <property type="evidence" value="ECO:0007669"/>
    <property type="project" value="InterPro"/>
</dbReference>
<dbReference type="GO" id="GO:0006508">
    <property type="term" value="P:proteolysis"/>
    <property type="evidence" value="ECO:0007669"/>
    <property type="project" value="UniProtKB-UniRule"/>
</dbReference>
<dbReference type="FunFam" id="3.30.1390.10:FF:000002">
    <property type="entry name" value="ATP-dependent Clp protease adapter protein ClpS"/>
    <property type="match status" value="1"/>
</dbReference>
<dbReference type="Gene3D" id="3.30.1390.10">
    <property type="match status" value="1"/>
</dbReference>
<dbReference type="HAMAP" id="MF_00302">
    <property type="entry name" value="ClpS"/>
    <property type="match status" value="1"/>
</dbReference>
<dbReference type="InterPro" id="IPR022935">
    <property type="entry name" value="ClpS"/>
</dbReference>
<dbReference type="InterPro" id="IPR003769">
    <property type="entry name" value="ClpS_core"/>
</dbReference>
<dbReference type="InterPro" id="IPR014719">
    <property type="entry name" value="Ribosomal_bL12_C/ClpS-like"/>
</dbReference>
<dbReference type="NCBIfam" id="NF000672">
    <property type="entry name" value="PRK00033.1-5"/>
    <property type="match status" value="1"/>
</dbReference>
<dbReference type="PANTHER" id="PTHR33473:SF19">
    <property type="entry name" value="ATP-DEPENDENT CLP PROTEASE ADAPTER PROTEIN CLPS"/>
    <property type="match status" value="1"/>
</dbReference>
<dbReference type="PANTHER" id="PTHR33473">
    <property type="entry name" value="ATP-DEPENDENT CLP PROTEASE ADAPTER PROTEIN CLPS1, CHLOROPLASTIC"/>
    <property type="match status" value="1"/>
</dbReference>
<dbReference type="Pfam" id="PF02617">
    <property type="entry name" value="ClpS"/>
    <property type="match status" value="1"/>
</dbReference>
<dbReference type="SUPFAM" id="SSF54736">
    <property type="entry name" value="ClpS-like"/>
    <property type="match status" value="1"/>
</dbReference>
<name>CLPS_PARXL</name>
<evidence type="ECO:0000255" key="1">
    <source>
        <dbReference type="HAMAP-Rule" id="MF_00302"/>
    </source>
</evidence>